<feature type="chain" id="PRO_0000229768" description="Synaptosomal-associated protein 25">
    <location>
        <begin position="1"/>
        <end position="206"/>
    </location>
</feature>
<feature type="domain" description="t-SNARE coiled-coil homology 1" evidence="6">
    <location>
        <begin position="19"/>
        <end position="81"/>
    </location>
</feature>
<feature type="domain" description="t-SNARE coiled-coil homology 2" evidence="6">
    <location>
        <begin position="140"/>
        <end position="202"/>
    </location>
</feature>
<feature type="region of interest" description="Interaction with CENPF" evidence="1">
    <location>
        <begin position="1"/>
        <end position="75"/>
    </location>
</feature>
<feature type="region of interest" description="Disordered" evidence="7">
    <location>
        <begin position="1"/>
        <end position="25"/>
    </location>
</feature>
<feature type="region of interest" description="Interaction with ZDHHC17" evidence="3">
    <location>
        <begin position="111"/>
        <end position="120"/>
    </location>
</feature>
<feature type="compositionally biased region" description="Basic and acidic residues" evidence="7">
    <location>
        <begin position="1"/>
        <end position="20"/>
    </location>
</feature>
<feature type="modified residue" description="Phosphothreonine" evidence="2">
    <location>
        <position position="138"/>
    </location>
</feature>
<feature type="modified residue" description="Phosphoserine" evidence="2">
    <location>
        <position position="154"/>
    </location>
</feature>
<feature type="modified residue" description="Phosphoserine" evidence="2">
    <location>
        <position position="187"/>
    </location>
</feature>
<feature type="lipid moiety-binding region" description="S-palmitoyl cysteine" evidence="2">
    <location>
        <position position="85"/>
    </location>
</feature>
<feature type="lipid moiety-binding region" description="S-palmitoyl cysteine" evidence="2">
    <location>
        <position position="88"/>
    </location>
</feature>
<feature type="lipid moiety-binding region" description="S-palmitoyl cysteine" evidence="2">
    <location>
        <position position="90"/>
    </location>
</feature>
<feature type="lipid moiety-binding region" description="S-palmitoyl cysteine" evidence="2">
    <location>
        <position position="92"/>
    </location>
</feature>
<feature type="splice variant" id="VSP_017743" description="In isoform 2." evidence="8">
    <original>ERIEEGMDQINKDMKEAEKNSTDLGKFCGLCV</original>
    <variation>DRVEEGMNHINQDMKEAEKNLKDLGKCCGLFI</variation>
    <location>
        <begin position="58"/>
        <end position="89"/>
    </location>
</feature>
<evidence type="ECO:0000250" key="1"/>
<evidence type="ECO:0000250" key="2">
    <source>
        <dbReference type="UniProtKB" id="P60879"/>
    </source>
</evidence>
<evidence type="ECO:0000250" key="3">
    <source>
        <dbReference type="UniProtKB" id="P60880"/>
    </source>
</evidence>
<evidence type="ECO:0000250" key="4">
    <source>
        <dbReference type="UniProtKB" id="P60881"/>
    </source>
</evidence>
<evidence type="ECO:0000250" key="5">
    <source>
        <dbReference type="UniProtKB" id="Q17QQ3"/>
    </source>
</evidence>
<evidence type="ECO:0000255" key="6">
    <source>
        <dbReference type="PROSITE-ProRule" id="PRU00202"/>
    </source>
</evidence>
<evidence type="ECO:0000256" key="7">
    <source>
        <dbReference type="SAM" id="MobiDB-lite"/>
    </source>
</evidence>
<evidence type="ECO:0000303" key="8">
    <source ref="1"/>
</evidence>
<evidence type="ECO:0000305" key="9"/>
<proteinExistence type="evidence at transcript level"/>
<name>SNP25_PONAB</name>
<organism>
    <name type="scientific">Pongo abelii</name>
    <name type="common">Sumatran orangutan</name>
    <name type="synonym">Pongo pygmaeus abelii</name>
    <dbReference type="NCBI Taxonomy" id="9601"/>
    <lineage>
        <taxon>Eukaryota</taxon>
        <taxon>Metazoa</taxon>
        <taxon>Chordata</taxon>
        <taxon>Craniata</taxon>
        <taxon>Vertebrata</taxon>
        <taxon>Euteleostomi</taxon>
        <taxon>Mammalia</taxon>
        <taxon>Eutheria</taxon>
        <taxon>Euarchontoglires</taxon>
        <taxon>Primates</taxon>
        <taxon>Haplorrhini</taxon>
        <taxon>Catarrhini</taxon>
        <taxon>Hominidae</taxon>
        <taxon>Pongo</taxon>
    </lineage>
</organism>
<gene>
    <name type="primary">SNAP25</name>
</gene>
<reference key="1">
    <citation type="submission" date="2004-11" db="EMBL/GenBank/DDBJ databases">
        <authorList>
            <consortium name="The German cDNA consortium"/>
        </authorList>
    </citation>
    <scope>NUCLEOTIDE SEQUENCE [LARGE SCALE MRNA] (ISOFORMS 1 AND 2)</scope>
    <source>
        <tissue>Brain cortex</tissue>
    </source>
</reference>
<sequence length="206" mass="23289">MAEDADMRNELEEMQRRADQLADESLESTRRMLQLVEESKDAGIRTLVMLDEQGEQLERIEEGMDQINKDMKEAEKNSTDLGKFCGLCVCPCNKLKSSDAYKKAWGNNQDGVVASQPARVVDEREQMAISGGFIRRVTNDARENEMDENLEQVSGIIGNLRHMALDMGNEIDTQNRQIDRIMEKADSNKTRIDEANQRATKMLGSG</sequence>
<keyword id="KW-0025">Alternative splicing</keyword>
<keyword id="KW-1003">Cell membrane</keyword>
<keyword id="KW-0175">Coiled coil</keyword>
<keyword id="KW-0963">Cytoplasm</keyword>
<keyword id="KW-0449">Lipoprotein</keyword>
<keyword id="KW-0472">Membrane</keyword>
<keyword id="KW-0564">Palmitate</keyword>
<keyword id="KW-0597">Phosphoprotein</keyword>
<keyword id="KW-1185">Reference proteome</keyword>
<keyword id="KW-0677">Repeat</keyword>
<keyword id="KW-0770">Synapse</keyword>
<keyword id="KW-0771">Synaptosome</keyword>
<comment type="function">
    <text evidence="1 4">t-SNARE involved in the molecular regulation of neurotransmitter release. May play an important role in the synaptic function of specific neuronal systems. Associates with proteins involved in vesicle docking and membrane fusion. Regulates plasma membrane recycling through its interaction with CENPF. Modulates the gating characteristics of the delayed rectifier voltage-dependent potassium channel KCNB1 in pancreatic beta cells.</text>
</comment>
<comment type="subunit">
    <text evidence="2 4 5">Part of the SNARE core complex containing SNAP25, VAMP2 and STX1A; this complex binds CPLX1. Found in a complex containing SYT1, SV2B and syntaxin-1. Found in a ternary complex with STX1A and VAMP8 (By similarity). Interacts with HSC70 and with SYT9, forming a complex with DNAJC5 (By similarity). The interaction with SYT9 is inhibited in presence of calcium (By similarity). Isoform 1 and isoform 2 interact with BLOC1S6. Interacts with CENPF. Interacts with EQTN. Interacts with HGS. Interacts with KCNB1 (via N-terminus); reduces the voltage-dependent potassium channel KCNB1 activity in pancreatic beta cells. Interacts with OTOF. Interacts with RIMS1. Interacts with SNAPIN. Interacts with STXBP6. Interacts with TRIM9. Interacts with ZDHHC13 (via ANK repeats). Interacts with ZDHHC17 (via ANK repeats). Associates with the BLOC-1 complex (By similarity). Interacts with PLCL1 (via C2 domain) (By similarity). Interacts with PRRT2; this interaction may impair the formation of the SNARE complex (By similarity). Interacts with alpha-synuclein/SNCA (By similarity). Interacts with PRPH2 (By similarity). Interacts with ROM1 (By similarity). Interacts with STX3 (By similarity).</text>
</comment>
<comment type="subcellular location">
    <subcellularLocation>
        <location evidence="2">Cytoplasm</location>
        <location evidence="2">Perinuclear region</location>
    </subcellularLocation>
    <subcellularLocation>
        <location evidence="4">Cell membrane</location>
        <topology evidence="2">Lipid-anchor</topology>
    </subcellularLocation>
    <subcellularLocation>
        <location evidence="2">Synapse</location>
        <location evidence="2">Synaptosome</location>
    </subcellularLocation>
    <subcellularLocation>
        <location evidence="2">Photoreceptor inner segment</location>
    </subcellularLocation>
    <text evidence="2 4">Membrane association requires palmitoylation. Expressed throughout cytoplasm, concentrating at the perinuclear region. Colocalizes with KCNB1 at the cell membrane (By similarity). Colocalizes with PLCL1 at the cell membrane (By similarity).</text>
</comment>
<comment type="alternative products">
    <event type="alternative splicing"/>
    <isoform>
        <id>Q5NVG5-1</id>
        <name>1</name>
        <name>SNAP-25b</name>
        <sequence type="displayed"/>
    </isoform>
    <isoform>
        <id>Q5NVG5-2</id>
        <name>2</name>
        <name>SNAP-25a</name>
        <sequence type="described" ref="VSP_017743"/>
    </isoform>
    <text>Isoforms differ by the usage of two alternative homologous exons (5a and 5b) which code for positions 56 to 94 and differ only in 9 positions out of 39.</text>
</comment>
<comment type="PTM">
    <text evidence="2">Palmitoylated. Cys-85 appears to be the main site, and palmitoylation is required for membrane association (By similarity).</text>
</comment>
<comment type="similarity">
    <text evidence="9">Belongs to the SNAP-25 family.</text>
</comment>
<accession>Q5NVG5</accession>
<accession>Q5NVK3</accession>
<accession>Q5R505</accession>
<accession>Q5R690</accession>
<accession>Q5R6U7</accession>
<dbReference type="EMBL" id="CR860387">
    <property type="protein sequence ID" value="CAH92513.1"/>
    <property type="molecule type" value="mRNA"/>
</dbReference>
<dbReference type="EMBL" id="CR860604">
    <property type="protein sequence ID" value="CAH92726.1"/>
    <property type="molecule type" value="mRNA"/>
</dbReference>
<dbReference type="EMBL" id="CR861080">
    <property type="protein sequence ID" value="CAH93161.1"/>
    <property type="molecule type" value="mRNA"/>
</dbReference>
<dbReference type="EMBL" id="CR926023">
    <property type="protein sequence ID" value="CAI29660.1"/>
    <property type="molecule type" value="mRNA"/>
</dbReference>
<dbReference type="EMBL" id="CR926071">
    <property type="protein sequence ID" value="CAI29698.1"/>
    <property type="molecule type" value="mRNA"/>
</dbReference>
<dbReference type="RefSeq" id="NP_001127109.1">
    <property type="nucleotide sequence ID" value="NM_001133637.1"/>
</dbReference>
<dbReference type="RefSeq" id="NP_001128960.1">
    <molecule id="Q5NVG5-2"/>
    <property type="nucleotide sequence ID" value="NM_001135488.2"/>
</dbReference>
<dbReference type="RefSeq" id="XP_024094342.1">
    <molecule id="Q5NVG5-2"/>
    <property type="nucleotide sequence ID" value="XM_024238574.2"/>
</dbReference>
<dbReference type="RefSeq" id="XP_054397517.1">
    <molecule id="Q5NVG5-2"/>
    <property type="nucleotide sequence ID" value="XM_054541542.2"/>
</dbReference>
<dbReference type="RefSeq" id="XP_054397518.1">
    <molecule id="Q5NVG5-2"/>
    <property type="nucleotide sequence ID" value="XM_054541543.1"/>
</dbReference>
<dbReference type="SMR" id="Q5NVG5"/>
<dbReference type="STRING" id="9601.ENSPPYP00000011970"/>
<dbReference type="Ensembl" id="ENSPPYT00000044529.1">
    <molecule id="Q5NVG5-2"/>
    <property type="protein sequence ID" value="ENSPPYP00000037298.1"/>
    <property type="gene ID" value="ENSPPYG00000010705.3"/>
</dbReference>
<dbReference type="GeneID" id="100189930"/>
<dbReference type="KEGG" id="pon:100189930"/>
<dbReference type="CTD" id="6616"/>
<dbReference type="eggNOG" id="KOG3065">
    <property type="taxonomic scope" value="Eukaryota"/>
</dbReference>
<dbReference type="GeneTree" id="ENSGT00950000182843"/>
<dbReference type="InParanoid" id="Q5NVG5"/>
<dbReference type="OrthoDB" id="19261at2759"/>
<dbReference type="Proteomes" id="UP000001595">
    <property type="component" value="Chromosome 20"/>
</dbReference>
<dbReference type="GO" id="GO:0005737">
    <property type="term" value="C:cytoplasm"/>
    <property type="evidence" value="ECO:0000250"/>
    <property type="project" value="UniProtKB"/>
</dbReference>
<dbReference type="GO" id="GO:0016020">
    <property type="term" value="C:membrane"/>
    <property type="evidence" value="ECO:0000250"/>
    <property type="project" value="UniProtKB"/>
</dbReference>
<dbReference type="GO" id="GO:0043005">
    <property type="term" value="C:neuron projection"/>
    <property type="evidence" value="ECO:0007669"/>
    <property type="project" value="UniProtKB-KW"/>
</dbReference>
<dbReference type="GO" id="GO:0048471">
    <property type="term" value="C:perinuclear region of cytoplasm"/>
    <property type="evidence" value="ECO:0007669"/>
    <property type="project" value="UniProtKB-SubCell"/>
</dbReference>
<dbReference type="GO" id="GO:0001917">
    <property type="term" value="C:photoreceptor inner segment"/>
    <property type="evidence" value="ECO:0007669"/>
    <property type="project" value="UniProtKB-SubCell"/>
</dbReference>
<dbReference type="GO" id="GO:0005886">
    <property type="term" value="C:plasma membrane"/>
    <property type="evidence" value="ECO:0007669"/>
    <property type="project" value="UniProtKB-SubCell"/>
</dbReference>
<dbReference type="GO" id="GO:0098793">
    <property type="term" value="C:presynapse"/>
    <property type="evidence" value="ECO:0007669"/>
    <property type="project" value="GOC"/>
</dbReference>
<dbReference type="GO" id="GO:0031201">
    <property type="term" value="C:SNARE complex"/>
    <property type="evidence" value="ECO:0000250"/>
    <property type="project" value="UniProtKB"/>
</dbReference>
<dbReference type="GO" id="GO:0070032">
    <property type="term" value="C:synaptobrevin 2-SNAP-25-syntaxin-1a-complexin I complex"/>
    <property type="evidence" value="ECO:0007669"/>
    <property type="project" value="TreeGrafter"/>
</dbReference>
<dbReference type="GO" id="GO:0005484">
    <property type="term" value="F:SNAP receptor activity"/>
    <property type="evidence" value="ECO:0007669"/>
    <property type="project" value="TreeGrafter"/>
</dbReference>
<dbReference type="GO" id="GO:0017075">
    <property type="term" value="F:syntaxin-1 binding"/>
    <property type="evidence" value="ECO:0007669"/>
    <property type="project" value="InterPro"/>
</dbReference>
<dbReference type="GO" id="GO:0005249">
    <property type="term" value="F:voltage-gated potassium channel activity"/>
    <property type="evidence" value="ECO:0007669"/>
    <property type="project" value="InterPro"/>
</dbReference>
<dbReference type="GO" id="GO:0031629">
    <property type="term" value="P:synaptic vesicle fusion to presynaptic active zone membrane"/>
    <property type="evidence" value="ECO:0007669"/>
    <property type="project" value="TreeGrafter"/>
</dbReference>
<dbReference type="GO" id="GO:0016082">
    <property type="term" value="P:synaptic vesicle priming"/>
    <property type="evidence" value="ECO:0007669"/>
    <property type="project" value="TreeGrafter"/>
</dbReference>
<dbReference type="CDD" id="cd15885">
    <property type="entry name" value="SNARE_SNAP25C"/>
    <property type="match status" value="1"/>
</dbReference>
<dbReference type="CDD" id="cd15894">
    <property type="entry name" value="SNARE_SNAP25N"/>
    <property type="match status" value="1"/>
</dbReference>
<dbReference type="FunFam" id="1.20.5.110:FF:000007">
    <property type="entry name" value="Synaptosomal-associated protein"/>
    <property type="match status" value="1"/>
</dbReference>
<dbReference type="FunFam" id="1.20.5.110:FF:000009">
    <property type="entry name" value="Synaptosomal-associated protein"/>
    <property type="match status" value="1"/>
</dbReference>
<dbReference type="Gene3D" id="1.20.5.110">
    <property type="match status" value="2"/>
</dbReference>
<dbReference type="InterPro" id="IPR000928">
    <property type="entry name" value="SNAP-25_dom"/>
</dbReference>
<dbReference type="InterPro" id="IPR039077">
    <property type="entry name" value="SNAP-25_N_SNARE_chord"/>
</dbReference>
<dbReference type="InterPro" id="IPR000727">
    <property type="entry name" value="T_SNARE_dom"/>
</dbReference>
<dbReference type="PANTHER" id="PTHR19305">
    <property type="entry name" value="SYNAPTOSOMAL ASSOCIATED PROTEIN"/>
    <property type="match status" value="1"/>
</dbReference>
<dbReference type="PANTHER" id="PTHR19305:SF5">
    <property type="entry name" value="SYNAPTOSOMAL-ASSOCIATED PROTEIN 25"/>
    <property type="match status" value="1"/>
</dbReference>
<dbReference type="Pfam" id="PF00835">
    <property type="entry name" value="SNAP-25"/>
    <property type="match status" value="1"/>
</dbReference>
<dbReference type="SMART" id="SM00397">
    <property type="entry name" value="t_SNARE"/>
    <property type="match status" value="2"/>
</dbReference>
<dbReference type="SUPFAM" id="SSF58038">
    <property type="entry name" value="SNARE fusion complex"/>
    <property type="match status" value="2"/>
</dbReference>
<dbReference type="PROSITE" id="PS50192">
    <property type="entry name" value="T_SNARE"/>
    <property type="match status" value="2"/>
</dbReference>
<protein>
    <recommendedName>
        <fullName>Synaptosomal-associated protein 25</fullName>
        <shortName>SNAP-25</shortName>
    </recommendedName>
    <alternativeName>
        <fullName>Synaptosomal-associated 25 kDa protein</fullName>
    </alternativeName>
</protein>